<dbReference type="EMBL" id="CP017626">
    <property type="protein sequence ID" value="AOW29322.1"/>
    <property type="molecule type" value="Genomic_DNA"/>
</dbReference>
<dbReference type="RefSeq" id="XP_711852.2">
    <property type="nucleotide sequence ID" value="XM_706759.2"/>
</dbReference>
<dbReference type="STRING" id="237561.Q59QA5"/>
<dbReference type="GlyCosmos" id="Q59QA5">
    <property type="glycosylation" value="14 sites, No reported glycans"/>
</dbReference>
<dbReference type="EnsemblFungi" id="C4_05920C_A-T">
    <property type="protein sequence ID" value="C4_05920C_A-T-p1"/>
    <property type="gene ID" value="C4_05920C_A"/>
</dbReference>
<dbReference type="GeneID" id="3646525"/>
<dbReference type="KEGG" id="cal:CAALFM_C405920CA"/>
<dbReference type="CGD" id="CAL0000196151">
    <property type="gene designation" value="PGA49"/>
</dbReference>
<dbReference type="VEuPathDB" id="FungiDB:C4_05920C_A"/>
<dbReference type="HOGENOM" id="CLU_377647_0_0_1"/>
<dbReference type="InParanoid" id="Q59QA5"/>
<dbReference type="OrthoDB" id="4023802at2759"/>
<dbReference type="PRO" id="PR:Q59QA5"/>
<dbReference type="Proteomes" id="UP000000559">
    <property type="component" value="Chromosome 4"/>
</dbReference>
<dbReference type="GO" id="GO:0005886">
    <property type="term" value="C:plasma membrane"/>
    <property type="evidence" value="ECO:0007669"/>
    <property type="project" value="UniProtKB-SubCell"/>
</dbReference>
<dbReference type="GO" id="GO:0098552">
    <property type="term" value="C:side of membrane"/>
    <property type="evidence" value="ECO:0007669"/>
    <property type="project" value="UniProtKB-KW"/>
</dbReference>
<name>PGA49_CANAL</name>
<sequence length="734" mass="81980">MNYITSLLLLSSNTFLHPTTTYLQSMNDSIVLVTSSVSTELTTLGYDPISTISGVNGTNNIDYIKLLNDTNSTFVQLDNSDTDIDDSSSNSEDVSSNDEQIALMNSSSDFSDESDEGNDSDDNGDEVENMENNQANESDTQNENDRVLNYDTSSSENENENENENENQLEQEHQHYYYKNRSKFYNHFLRYPEVVINNNDDRAELASTKNNLLVRSPKSNNRRLIGSSRKKTLKSKSKSKSSKLKHKSRKSHKRRPKLLKSKDVETNEITTVEVITLTITKVLARHDLAAIVTPIQQHQSGHLIIGYPLPIATKSRLHGYYKSSGVLKEVDANPTEEYDSGDGKENTQQNPIPEKMRLPTNDDPYSLKPTHHYDPSATMQNPHKQFTNRTGNFEIPTNVQDIDDITFPIDLSSSDSTSNLYSILPMNQTNLPDVNTLSLAPGTGSVPPRYSNHHSEFTVERPPRPSRTKKRPRIKAKKTMKVSTQISSAMSKSIHITRIGSTSSGIASGITNIVIPNSSSSIYDNYQDSSSDKQPVSLSMPTKTITMTTDTTSEPVTITEKLDKPKFPDIFTIIRSKLLSKKPQETKLHSPTSTDTKSSKLMSSSSSNNNKPEISKTTKEYNQTQESTSYNTTKAVPKTSVVSSTTSTKPNDQGNNILNSFIQFTETIHSRIRFPTADDNNNNAGNNYHRRFTGVVLPENRQFVFRSASQNLSFSVLGLIILLLLLPGLLIIIM</sequence>
<protein>
    <recommendedName>
        <fullName>Predicted GPI-anchored protein 49</fullName>
    </recommendedName>
</protein>
<gene>
    <name type="primary">PGA49</name>
    <name type="ordered locus">CAALFM_C405920CA</name>
    <name type="ORF">CaO19.11882</name>
    <name type="ORF">CaO19.4404</name>
</gene>
<feature type="signal peptide" evidence="1">
    <location>
        <begin position="1"/>
        <end position="16"/>
    </location>
</feature>
<feature type="chain" id="PRO_0000429952" description="Predicted GPI-anchored protein 49">
    <location>
        <begin position="17"/>
        <end position="707"/>
    </location>
</feature>
<feature type="propeptide" id="PRO_0000429953" description="Removed in mature form" evidence="1">
    <location>
        <begin position="708"/>
        <end position="734"/>
    </location>
</feature>
<feature type="region of interest" description="Disordered" evidence="2">
    <location>
        <begin position="78"/>
        <end position="145"/>
    </location>
</feature>
<feature type="region of interest" description="Disordered" evidence="2">
    <location>
        <begin position="216"/>
        <end position="262"/>
    </location>
</feature>
<feature type="region of interest" description="Disordered" evidence="2">
    <location>
        <begin position="331"/>
        <end position="360"/>
    </location>
</feature>
<feature type="region of interest" description="Disordered" evidence="2">
    <location>
        <begin position="447"/>
        <end position="479"/>
    </location>
</feature>
<feature type="region of interest" description="Disordered" evidence="2">
    <location>
        <begin position="582"/>
        <end position="653"/>
    </location>
</feature>
<feature type="compositionally biased region" description="Low complexity" evidence="2">
    <location>
        <begin position="87"/>
        <end position="98"/>
    </location>
</feature>
<feature type="compositionally biased region" description="Acidic residues" evidence="2">
    <location>
        <begin position="110"/>
        <end position="129"/>
    </location>
</feature>
<feature type="compositionally biased region" description="Polar residues" evidence="2">
    <location>
        <begin position="130"/>
        <end position="141"/>
    </location>
</feature>
<feature type="compositionally biased region" description="Basic residues" evidence="2">
    <location>
        <begin position="228"/>
        <end position="259"/>
    </location>
</feature>
<feature type="compositionally biased region" description="Basic and acidic residues" evidence="2">
    <location>
        <begin position="453"/>
        <end position="463"/>
    </location>
</feature>
<feature type="compositionally biased region" description="Basic residues" evidence="2">
    <location>
        <begin position="464"/>
        <end position="479"/>
    </location>
</feature>
<feature type="compositionally biased region" description="Low complexity" evidence="2">
    <location>
        <begin position="592"/>
        <end position="611"/>
    </location>
</feature>
<feature type="compositionally biased region" description="Polar residues" evidence="2">
    <location>
        <begin position="620"/>
        <end position="631"/>
    </location>
</feature>
<feature type="compositionally biased region" description="Low complexity" evidence="2">
    <location>
        <begin position="632"/>
        <end position="650"/>
    </location>
</feature>
<feature type="lipid moiety-binding region" description="GPI-anchor amidated serine" evidence="1">
    <location>
        <position position="707"/>
    </location>
</feature>
<feature type="glycosylation site" description="N-linked (GlcNAc...) asparagine" evidence="1">
    <location>
        <position position="27"/>
    </location>
</feature>
<feature type="glycosylation site" description="N-linked (GlcNAc...) asparagine" evidence="1">
    <location>
        <position position="56"/>
    </location>
</feature>
<feature type="glycosylation site" description="N-linked (GlcNAc...) asparagine" evidence="1">
    <location>
        <position position="68"/>
    </location>
</feature>
<feature type="glycosylation site" description="N-linked (GlcNAc...) asparagine" evidence="1">
    <location>
        <position position="71"/>
    </location>
</feature>
<feature type="glycosylation site" description="N-linked (GlcNAc...) asparagine" evidence="1">
    <location>
        <position position="105"/>
    </location>
</feature>
<feature type="glycosylation site" description="N-linked (GlcNAc...) asparagine" evidence="1">
    <location>
        <position position="118"/>
    </location>
</feature>
<feature type="glycosylation site" description="N-linked (GlcNAc...) asparagine" evidence="1">
    <location>
        <position position="136"/>
    </location>
</feature>
<feature type="glycosylation site" description="N-linked (GlcNAc...) asparagine" evidence="1">
    <location>
        <position position="180"/>
    </location>
</feature>
<feature type="glycosylation site" description="N-linked (GlcNAc...) asparagine" evidence="1">
    <location>
        <position position="388"/>
    </location>
</feature>
<feature type="glycosylation site" description="N-linked (GlcNAc...) asparagine" evidence="1">
    <location>
        <position position="427"/>
    </location>
</feature>
<feature type="glycosylation site" description="N-linked (GlcNAc...) asparagine" evidence="1">
    <location>
        <position position="517"/>
    </location>
</feature>
<feature type="glycosylation site" description="N-linked (GlcNAc...) asparagine" evidence="1">
    <location>
        <position position="622"/>
    </location>
</feature>
<feature type="glycosylation site" description="N-linked (GlcNAc...) asparagine" evidence="1">
    <location>
        <position position="631"/>
    </location>
</feature>
<feature type="glycosylation site" description="N-linked (GlcNAc...) asparagine" evidence="1">
    <location>
        <position position="711"/>
    </location>
</feature>
<proteinExistence type="evidence at protein level"/>
<organism>
    <name type="scientific">Candida albicans (strain SC5314 / ATCC MYA-2876)</name>
    <name type="common">Yeast</name>
    <dbReference type="NCBI Taxonomy" id="237561"/>
    <lineage>
        <taxon>Eukaryota</taxon>
        <taxon>Fungi</taxon>
        <taxon>Dikarya</taxon>
        <taxon>Ascomycota</taxon>
        <taxon>Saccharomycotina</taxon>
        <taxon>Pichiomycetes</taxon>
        <taxon>Debaryomycetaceae</taxon>
        <taxon>Candida/Lodderomyces clade</taxon>
        <taxon>Candida</taxon>
    </lineage>
</organism>
<evidence type="ECO:0000255" key="1"/>
<evidence type="ECO:0000256" key="2">
    <source>
        <dbReference type="SAM" id="MobiDB-lite"/>
    </source>
</evidence>
<evidence type="ECO:0000269" key="3">
    <source>
    </source>
</evidence>
<evidence type="ECO:0000305" key="4"/>
<accession>Q59QA5</accession>
<accession>A0A1D8PMG5</accession>
<accession>Q59Q85</accession>
<comment type="subcellular location">
    <subcellularLocation>
        <location evidence="4">Cell membrane</location>
        <topology evidence="4">Lipid-anchor</topology>
        <topology evidence="4">GPI-anchor</topology>
    </subcellularLocation>
</comment>
<comment type="induction">
    <text evidence="3">Up-regulated upon milbemycins A3 oxim derivative (A3Ox) treatment.</text>
</comment>
<keyword id="KW-1003">Cell membrane</keyword>
<keyword id="KW-0325">Glycoprotein</keyword>
<keyword id="KW-0336">GPI-anchor</keyword>
<keyword id="KW-0449">Lipoprotein</keyword>
<keyword id="KW-0472">Membrane</keyword>
<keyword id="KW-1185">Reference proteome</keyword>
<keyword id="KW-0732">Signal</keyword>
<reference key="1">
    <citation type="journal article" date="2004" name="Proc. Natl. Acad. Sci. U.S.A.">
        <title>The diploid genome sequence of Candida albicans.</title>
        <authorList>
            <person name="Jones T."/>
            <person name="Federspiel N.A."/>
            <person name="Chibana H."/>
            <person name="Dungan J."/>
            <person name="Kalman S."/>
            <person name="Magee B.B."/>
            <person name="Newport G."/>
            <person name="Thorstenson Y.R."/>
            <person name="Agabian N."/>
            <person name="Magee P.T."/>
            <person name="Davis R.W."/>
            <person name="Scherer S."/>
        </authorList>
    </citation>
    <scope>NUCLEOTIDE SEQUENCE [LARGE SCALE GENOMIC DNA]</scope>
    <source>
        <strain>SC5314 / ATCC MYA-2876</strain>
    </source>
</reference>
<reference key="2">
    <citation type="journal article" date="2007" name="Genome Biol.">
        <title>Assembly of the Candida albicans genome into sixteen supercontigs aligned on the eight chromosomes.</title>
        <authorList>
            <person name="van het Hoog M."/>
            <person name="Rast T.J."/>
            <person name="Martchenko M."/>
            <person name="Grindle S."/>
            <person name="Dignard D."/>
            <person name="Hogues H."/>
            <person name="Cuomo C."/>
            <person name="Berriman M."/>
            <person name="Scherer S."/>
            <person name="Magee B.B."/>
            <person name="Whiteway M."/>
            <person name="Chibana H."/>
            <person name="Nantel A."/>
            <person name="Magee P.T."/>
        </authorList>
    </citation>
    <scope>GENOME REANNOTATION</scope>
    <source>
        <strain>SC5314 / ATCC MYA-2876</strain>
    </source>
</reference>
<reference key="3">
    <citation type="journal article" date="2013" name="Genome Biol.">
        <title>Assembly of a phased diploid Candida albicans genome facilitates allele-specific measurements and provides a simple model for repeat and indel structure.</title>
        <authorList>
            <person name="Muzzey D."/>
            <person name="Schwartz K."/>
            <person name="Weissman J.S."/>
            <person name="Sherlock G."/>
        </authorList>
    </citation>
    <scope>NUCLEOTIDE SEQUENCE [LARGE SCALE GENOMIC DNA]</scope>
    <scope>GENOME REANNOTATION</scope>
    <source>
        <strain>SC5314 / ATCC MYA-2876</strain>
    </source>
</reference>
<reference key="4">
    <citation type="journal article" date="2003" name="Yeast">
        <title>Genome-wide identification of fungal GPI proteins.</title>
        <authorList>
            <person name="De Groot P.W."/>
            <person name="Hellingwerf K.J."/>
            <person name="Klis F.M."/>
        </authorList>
    </citation>
    <scope>PREDICTION OF GPI-ANCHOR</scope>
</reference>
<reference key="5">
    <citation type="journal article" date="2013" name="Antimicrob. Agents Chemother.">
        <title>Milbemycins: more than efflux inhibitors for fungal pathogens.</title>
        <authorList>
            <person name="Silva L.V."/>
            <person name="Sanguinetti M."/>
            <person name="Vandeputte P."/>
            <person name="Torelli R."/>
            <person name="Rochat B."/>
            <person name="Sanglard D."/>
        </authorList>
    </citation>
    <scope>INDUCTION</scope>
</reference>